<organism>
    <name type="scientific">Homo sapiens</name>
    <name type="common">Human</name>
    <dbReference type="NCBI Taxonomy" id="9606"/>
    <lineage>
        <taxon>Eukaryota</taxon>
        <taxon>Metazoa</taxon>
        <taxon>Chordata</taxon>
        <taxon>Craniata</taxon>
        <taxon>Vertebrata</taxon>
        <taxon>Euteleostomi</taxon>
        <taxon>Mammalia</taxon>
        <taxon>Eutheria</taxon>
        <taxon>Euarchontoglires</taxon>
        <taxon>Primates</taxon>
        <taxon>Haplorrhini</taxon>
        <taxon>Catarrhini</taxon>
        <taxon>Hominidae</taxon>
        <taxon>Homo</taxon>
    </lineage>
</organism>
<reference key="1">
    <citation type="journal article" date="2005" name="Nature">
        <title>Generation and annotation of the DNA sequences of human chromosomes 2 and 4.</title>
        <authorList>
            <person name="Hillier L.W."/>
            <person name="Graves T.A."/>
            <person name="Fulton R.S."/>
            <person name="Fulton L.A."/>
            <person name="Pepin K.H."/>
            <person name="Minx P."/>
            <person name="Wagner-McPherson C."/>
            <person name="Layman D."/>
            <person name="Wylie K."/>
            <person name="Sekhon M."/>
            <person name="Becker M.C."/>
            <person name="Fewell G.A."/>
            <person name="Delehaunty K.D."/>
            <person name="Miner T.L."/>
            <person name="Nash W.E."/>
            <person name="Kremitzki C."/>
            <person name="Oddy L."/>
            <person name="Du H."/>
            <person name="Sun H."/>
            <person name="Bradshaw-Cordum H."/>
            <person name="Ali J."/>
            <person name="Carter J."/>
            <person name="Cordes M."/>
            <person name="Harris A."/>
            <person name="Isak A."/>
            <person name="van Brunt A."/>
            <person name="Nguyen C."/>
            <person name="Du F."/>
            <person name="Courtney L."/>
            <person name="Kalicki J."/>
            <person name="Ozersky P."/>
            <person name="Abbott S."/>
            <person name="Armstrong J."/>
            <person name="Belter E.A."/>
            <person name="Caruso L."/>
            <person name="Cedroni M."/>
            <person name="Cotton M."/>
            <person name="Davidson T."/>
            <person name="Desai A."/>
            <person name="Elliott G."/>
            <person name="Erb T."/>
            <person name="Fronick C."/>
            <person name="Gaige T."/>
            <person name="Haakenson W."/>
            <person name="Haglund K."/>
            <person name="Holmes A."/>
            <person name="Harkins R."/>
            <person name="Kim K."/>
            <person name="Kruchowski S.S."/>
            <person name="Strong C.M."/>
            <person name="Grewal N."/>
            <person name="Goyea E."/>
            <person name="Hou S."/>
            <person name="Levy A."/>
            <person name="Martinka S."/>
            <person name="Mead K."/>
            <person name="McLellan M.D."/>
            <person name="Meyer R."/>
            <person name="Randall-Maher J."/>
            <person name="Tomlinson C."/>
            <person name="Dauphin-Kohlberg S."/>
            <person name="Kozlowicz-Reilly A."/>
            <person name="Shah N."/>
            <person name="Swearengen-Shahid S."/>
            <person name="Snider J."/>
            <person name="Strong J.T."/>
            <person name="Thompson J."/>
            <person name="Yoakum M."/>
            <person name="Leonard S."/>
            <person name="Pearman C."/>
            <person name="Trani L."/>
            <person name="Radionenko M."/>
            <person name="Waligorski J.E."/>
            <person name="Wang C."/>
            <person name="Rock S.M."/>
            <person name="Tin-Wollam A.-M."/>
            <person name="Maupin R."/>
            <person name="Latreille P."/>
            <person name="Wendl M.C."/>
            <person name="Yang S.-P."/>
            <person name="Pohl C."/>
            <person name="Wallis J.W."/>
            <person name="Spieth J."/>
            <person name="Bieri T.A."/>
            <person name="Berkowicz N."/>
            <person name="Nelson J.O."/>
            <person name="Osborne J."/>
            <person name="Ding L."/>
            <person name="Meyer R."/>
            <person name="Sabo A."/>
            <person name="Shotland Y."/>
            <person name="Sinha P."/>
            <person name="Wohldmann P.E."/>
            <person name="Cook L.L."/>
            <person name="Hickenbotham M.T."/>
            <person name="Eldred J."/>
            <person name="Williams D."/>
            <person name="Jones T.A."/>
            <person name="She X."/>
            <person name="Ciccarelli F.D."/>
            <person name="Izaurralde E."/>
            <person name="Taylor J."/>
            <person name="Schmutz J."/>
            <person name="Myers R.M."/>
            <person name="Cox D.R."/>
            <person name="Huang X."/>
            <person name="McPherson J.D."/>
            <person name="Mardis E.R."/>
            <person name="Clifton S.W."/>
            <person name="Warren W.C."/>
            <person name="Chinwalla A.T."/>
            <person name="Eddy S.R."/>
            <person name="Marra M.A."/>
            <person name="Ovcharenko I."/>
            <person name="Furey T.S."/>
            <person name="Miller W."/>
            <person name="Eichler E.E."/>
            <person name="Bork P."/>
            <person name="Suyama M."/>
            <person name="Torrents D."/>
            <person name="Waterston R.H."/>
            <person name="Wilson R.K."/>
        </authorList>
    </citation>
    <scope>NUCLEOTIDE SEQUENCE [LARGE SCALE GENOMIC DNA]</scope>
</reference>
<reference key="2">
    <citation type="journal article" date="2004" name="Genome Res.">
        <title>The status, quality, and expansion of the NIH full-length cDNA project: the Mammalian Gene Collection (MGC).</title>
        <authorList>
            <consortium name="The MGC Project Team"/>
        </authorList>
    </citation>
    <scope>NUCLEOTIDE SEQUENCE [LARGE SCALE MRNA]</scope>
    <source>
        <tissue>Lung</tissue>
        <tissue>Testis</tissue>
    </source>
</reference>
<reference evidence="7" key="3">
    <citation type="journal article" date="2022" name="Proc. Natl. Acad. Sci. U.S.A.">
        <title>SPACA9 is a lumenal protein of human ciliary singlet and doublet microtubules.</title>
        <authorList>
            <person name="Gui M."/>
            <person name="Croft J.T."/>
            <person name="Zabeo D."/>
            <person name="Acharya V."/>
            <person name="Kollman J.M."/>
            <person name="Burgoyne T."/>
            <person name="Hoog J.L."/>
            <person name="Brown A."/>
        </authorList>
    </citation>
    <scope>STRUCTURE BY ELECTRON MICROSCOPY (3.60 ANGSTROMS)</scope>
    <scope>FUNCTION</scope>
    <scope>SUBCELLULAR LOCATION</scope>
    <scope>TISSUE SPECIFICITY</scope>
</reference>
<keyword id="KW-0002">3D-structure</keyword>
<keyword id="KW-0966">Cell projection</keyword>
<keyword id="KW-0969">Cilium</keyword>
<keyword id="KW-0175">Coiled coil</keyword>
<keyword id="KW-0963">Cytoplasm</keyword>
<keyword id="KW-0206">Cytoskeleton</keyword>
<keyword id="KW-0282">Flagellum</keyword>
<keyword id="KW-1267">Proteomics identification</keyword>
<keyword id="KW-1185">Reference proteome</keyword>
<protein>
    <recommendedName>
        <fullName evidence="6">Cilia- and flagella- associated protein 210</fullName>
    </recommendedName>
    <alternativeName>
        <fullName>Coiled-coil domain-containing protein 173</fullName>
    </alternativeName>
</protein>
<accession>Q0VFZ6</accession>
<accession>Q6PJF6</accession>
<comment type="function">
    <text evidence="4">Microtubule inner protein (MIP) part of the dynein-decorated doublet microtubules (DMTs) in cilia axoneme, which is required for motile cilia beating.</text>
</comment>
<comment type="subunit">
    <text evidence="1">Microtubule inner protein component of sperm flagellar doublet microtubules.</text>
</comment>
<comment type="subcellular location">
    <subcellularLocation>
        <location evidence="4">Cytoplasm</location>
        <location evidence="4">Cytoskeleton</location>
        <location evidence="4">Cilium axoneme</location>
    </subcellularLocation>
    <subcellularLocation>
        <location evidence="1">Cytoplasm</location>
        <location evidence="1">Cytoskeleton</location>
        <location evidence="1">Flagellum axoneme</location>
    </subcellularLocation>
</comment>
<comment type="tissue specificity">
    <text evidence="4">Expressed in airway epithelial cells.</text>
</comment>
<comment type="caution">
    <text evidence="5">It is uncertain whether Met-1 or Met-7 is the initiator.</text>
</comment>
<comment type="sequence caution" evidence="5">
    <conflict type="erroneous initiation">
        <sequence resource="EMBL-CDS" id="AAI17446"/>
    </conflict>
    <text>Truncated N-terminus.</text>
</comment>
<feature type="chain" id="PRO_0000318846" description="Cilia- and flagella- associated protein 210">
    <location>
        <begin position="1"/>
        <end position="552"/>
    </location>
</feature>
<feature type="region of interest" description="Disordered" evidence="3">
    <location>
        <begin position="216"/>
        <end position="238"/>
    </location>
</feature>
<feature type="coiled-coil region" evidence="2">
    <location>
        <begin position="53"/>
        <end position="143"/>
    </location>
</feature>
<feature type="coiled-coil region" evidence="2">
    <location>
        <begin position="186"/>
        <end position="307"/>
    </location>
</feature>
<feature type="coiled-coil region" evidence="2">
    <location>
        <begin position="348"/>
        <end position="409"/>
    </location>
</feature>
<feature type="coiled-coil region" evidence="2">
    <location>
        <begin position="460"/>
        <end position="488"/>
    </location>
</feature>
<dbReference type="EMBL" id="AC016772">
    <property type="status" value="NOT_ANNOTATED_CDS"/>
    <property type="molecule type" value="Genomic_DNA"/>
</dbReference>
<dbReference type="EMBL" id="BC015980">
    <property type="protein sequence ID" value="AAH15980.1"/>
    <property type="molecule type" value="mRNA"/>
</dbReference>
<dbReference type="EMBL" id="BC117445">
    <property type="protein sequence ID" value="AAI17446.1"/>
    <property type="status" value="ALT_INIT"/>
    <property type="molecule type" value="mRNA"/>
</dbReference>
<dbReference type="CCDS" id="CCDS46445.1"/>
<dbReference type="RefSeq" id="NP_001078916.1">
    <property type="nucleotide sequence ID" value="NM_001085447.2"/>
</dbReference>
<dbReference type="PDB" id="7UNG">
    <property type="method" value="EM"/>
    <property type="resolution" value="3.60 A"/>
    <property type="chains" value="o/o1/p=1-552"/>
</dbReference>
<dbReference type="PDB" id="8J07">
    <property type="method" value="EM"/>
    <property type="resolution" value="4.10 A"/>
    <property type="chains" value="2Q/2R/2S=1-552"/>
</dbReference>
<dbReference type="PDBsum" id="7UNG"/>
<dbReference type="PDBsum" id="8J07"/>
<dbReference type="EMDB" id="EMD-26624"/>
<dbReference type="EMDB" id="EMD-35888"/>
<dbReference type="SMR" id="Q0VFZ6"/>
<dbReference type="BioGRID" id="126216">
    <property type="interactions" value="7"/>
</dbReference>
<dbReference type="FunCoup" id="Q0VFZ6">
    <property type="interactions" value="108"/>
</dbReference>
<dbReference type="IntAct" id="Q0VFZ6">
    <property type="interactions" value="4"/>
</dbReference>
<dbReference type="STRING" id="9606.ENSP00000391504"/>
<dbReference type="GlyGen" id="Q0VFZ6">
    <property type="glycosylation" value="1 site, 1 O-linked glycan (1 site)"/>
</dbReference>
<dbReference type="iPTMnet" id="Q0VFZ6"/>
<dbReference type="PhosphoSitePlus" id="Q0VFZ6"/>
<dbReference type="BioMuta" id="CCDC173"/>
<dbReference type="DMDM" id="327478499"/>
<dbReference type="jPOST" id="Q0VFZ6"/>
<dbReference type="MassIVE" id="Q0VFZ6"/>
<dbReference type="PaxDb" id="9606-ENSP00000391504"/>
<dbReference type="PeptideAtlas" id="Q0VFZ6"/>
<dbReference type="ProteomicsDB" id="58836"/>
<dbReference type="Antibodypedia" id="64630">
    <property type="antibodies" value="43 antibodies from 10 providers"/>
</dbReference>
<dbReference type="DNASU" id="129881"/>
<dbReference type="Ensembl" id="ENST00000447353.6">
    <property type="protein sequence ID" value="ENSP00000391504.1"/>
    <property type="gene ID" value="ENSG00000154479.13"/>
</dbReference>
<dbReference type="GeneID" id="129881"/>
<dbReference type="KEGG" id="hsa:129881"/>
<dbReference type="MANE-Select" id="ENST00000447353.6">
    <property type="protein sequence ID" value="ENSP00000391504.1"/>
    <property type="RefSeq nucleotide sequence ID" value="NM_001085447.2"/>
    <property type="RefSeq protein sequence ID" value="NP_001078916.1"/>
</dbReference>
<dbReference type="UCSC" id="uc002ufe.3">
    <property type="organism name" value="human"/>
</dbReference>
<dbReference type="AGR" id="HGNC:25064"/>
<dbReference type="CTD" id="129881"/>
<dbReference type="GeneCards" id="CFAP210"/>
<dbReference type="HGNC" id="HGNC:25064">
    <property type="gene designation" value="CFAP210"/>
</dbReference>
<dbReference type="HPA" id="ENSG00000154479">
    <property type="expression patterns" value="Group enriched (choroid plexus, testis)"/>
</dbReference>
<dbReference type="neXtProt" id="NX_Q0VFZ6"/>
<dbReference type="OpenTargets" id="ENSG00000154479"/>
<dbReference type="VEuPathDB" id="HostDB:ENSG00000154479"/>
<dbReference type="eggNOG" id="ENOG502QPZ3">
    <property type="taxonomic scope" value="Eukaryota"/>
</dbReference>
<dbReference type="GeneTree" id="ENSGT00730000111149"/>
<dbReference type="HOGENOM" id="CLU_036492_1_0_1"/>
<dbReference type="InParanoid" id="Q0VFZ6"/>
<dbReference type="OMA" id="EMHFRSQ"/>
<dbReference type="OrthoDB" id="331765at2759"/>
<dbReference type="PAN-GO" id="Q0VFZ6">
    <property type="GO annotations" value="0 GO annotations based on evolutionary models"/>
</dbReference>
<dbReference type="PhylomeDB" id="Q0VFZ6"/>
<dbReference type="TreeFam" id="TF328736"/>
<dbReference type="PathwayCommons" id="Q0VFZ6"/>
<dbReference type="SignaLink" id="Q0VFZ6"/>
<dbReference type="BioGRID-ORCS" id="129881">
    <property type="hits" value="16 hits in 1156 CRISPR screens"/>
</dbReference>
<dbReference type="ChiTaRS" id="CCDC173">
    <property type="organism name" value="human"/>
</dbReference>
<dbReference type="GenomeRNAi" id="129881"/>
<dbReference type="Pharos" id="Q0VFZ6">
    <property type="development level" value="Tdark"/>
</dbReference>
<dbReference type="PRO" id="PR:Q0VFZ6"/>
<dbReference type="Proteomes" id="UP000005640">
    <property type="component" value="Chromosome 2"/>
</dbReference>
<dbReference type="RNAct" id="Q0VFZ6">
    <property type="molecule type" value="protein"/>
</dbReference>
<dbReference type="Bgee" id="ENSG00000154479">
    <property type="expression patterns" value="Expressed in sperm and 112 other cell types or tissues"/>
</dbReference>
<dbReference type="ExpressionAtlas" id="Q0VFZ6">
    <property type="expression patterns" value="baseline and differential"/>
</dbReference>
<dbReference type="GO" id="GO:0160112">
    <property type="term" value="C:axonemal B tubule inner sheath"/>
    <property type="evidence" value="ECO:0000250"/>
    <property type="project" value="UniProtKB"/>
</dbReference>
<dbReference type="GO" id="GO:0005879">
    <property type="term" value="C:axonemal microtubule"/>
    <property type="evidence" value="ECO:0000314"/>
    <property type="project" value="UniProtKB"/>
</dbReference>
<dbReference type="GO" id="GO:0036126">
    <property type="term" value="C:sperm flagellum"/>
    <property type="evidence" value="ECO:0000250"/>
    <property type="project" value="UniProtKB"/>
</dbReference>
<dbReference type="GO" id="GO:0030317">
    <property type="term" value="P:flagellated sperm motility"/>
    <property type="evidence" value="ECO:0000250"/>
    <property type="project" value="UniProtKB"/>
</dbReference>
<dbReference type="InterPro" id="IPR039986">
    <property type="entry name" value="CFAP210"/>
</dbReference>
<dbReference type="InterPro" id="IPR043597">
    <property type="entry name" value="TPH_dom"/>
</dbReference>
<dbReference type="PANTHER" id="PTHR28663:SF1">
    <property type="entry name" value="CILIA- AND FLAGELLA- ASSOCIATED PROTEIN 210"/>
    <property type="match status" value="1"/>
</dbReference>
<dbReference type="PANTHER" id="PTHR28663">
    <property type="entry name" value="COILED-COIL DOMAIN-CONTAINING PROTEIN 173"/>
    <property type="match status" value="1"/>
</dbReference>
<dbReference type="Pfam" id="PF13868">
    <property type="entry name" value="TPH"/>
    <property type="match status" value="1"/>
</dbReference>
<evidence type="ECO:0000250" key="1">
    <source>
        <dbReference type="UniProtKB" id="A0JLY1"/>
    </source>
</evidence>
<evidence type="ECO:0000255" key="2"/>
<evidence type="ECO:0000256" key="3">
    <source>
        <dbReference type="SAM" id="MobiDB-lite"/>
    </source>
</evidence>
<evidence type="ECO:0000269" key="4">
    <source>
    </source>
</evidence>
<evidence type="ECO:0000305" key="5"/>
<evidence type="ECO:0000312" key="6">
    <source>
        <dbReference type="HGNC" id="HGNC:25064"/>
    </source>
</evidence>
<evidence type="ECO:0007744" key="7">
    <source>
        <dbReference type="PDB" id="7UNG"/>
    </source>
</evidence>
<sequence>MDTSSEMLVRFGRRCGRAKESTEIRNSEEDQVLYLPLLPSKVDLQQVTIIPHDEWKRIQDSLDRLTREAACLRAERKAKKEMHLRSQEVVKHWTNTYAGMKEQKLEAKKKRDEEIEAERQILDLEEEIYKQGKRKKAIENAKQYQFYQTERVKNFHSGLLLSRVMKERDAQIEFRKSKIKSDKKWEEQLKLNIEKAFKEEQEKAEKRHRERVALAKDHLKQIKEHEEEEERRKKYEEKDAEEIKRQNALYEIEMRKKLEKKREEMHESRRRFLEHMQDKHIIKAVEQQQQEEEDEKMRKFIKAKKRLIQMGKEKEAETHRLMEKRRERIHNFLSELLKEKLDNEDMIIARDIAEAEAEWEKREREKDEKNKAELKTIAEYRAIVMKNKEEEERQRKIEAKEQLLAVMKADQIFWEHEKEKKCKADKEHQEVQDAHIQQMAKNKFNAKQAKQAELDYCRLTEALVAEKEKEFQDYAREVIELESETTNKYIYPLVKAVQEGPGGGRGPVFVDRGGLRPSYQANDVTGVQLPFYNSQGPKYNFQKSKRRLGFTW</sequence>
<proteinExistence type="evidence at protein level"/>
<gene>
    <name evidence="6" type="primary">CFAP210</name>
    <name type="synonym">C2orf77</name>
    <name type="synonym">CCDC173</name>
</gene>
<name>CF210_HUMAN</name>